<sequence>MLFINITFACILAIRFYSLSISIRHEKALIAKGAIQYGKRNSTLLSIAHVAFYFAAIIEANKQNLSFNSTSQIGLAILIFAIAMLFYVIYELKEIWTVKIYILPEHQINRSFLFKYVRHPNYFLNIIPELIGLSLFCQAKYTALVGLPIYLLILAVRIKQEESAMSHLFPKS</sequence>
<dbReference type="EMBL" id="L42023">
    <property type="protein sequence ID" value="AAC21982.1"/>
    <property type="molecule type" value="Genomic_DNA"/>
</dbReference>
<dbReference type="PIR" id="B64006">
    <property type="entry name" value="B64006"/>
</dbReference>
<dbReference type="RefSeq" id="NP_438484.1">
    <property type="nucleotide sequence ID" value="NC_000907.1"/>
</dbReference>
<dbReference type="SMR" id="P43984"/>
<dbReference type="STRING" id="71421.HI_0318"/>
<dbReference type="EnsemblBacteria" id="AAC21982">
    <property type="protein sequence ID" value="AAC21982"/>
    <property type="gene ID" value="HI_0318"/>
</dbReference>
<dbReference type="KEGG" id="hin:HI_0318"/>
<dbReference type="PATRIC" id="fig|71421.8.peg.336"/>
<dbReference type="eggNOG" id="COG1755">
    <property type="taxonomic scope" value="Bacteria"/>
</dbReference>
<dbReference type="HOGENOM" id="CLU_102515_1_0_6"/>
<dbReference type="OrthoDB" id="5363370at2"/>
<dbReference type="PhylomeDB" id="P43984"/>
<dbReference type="BioCyc" id="HINF71421:G1GJ1-335-MONOMER"/>
<dbReference type="Proteomes" id="UP000000579">
    <property type="component" value="Chromosome"/>
</dbReference>
<dbReference type="GO" id="GO:0005886">
    <property type="term" value="C:plasma membrane"/>
    <property type="evidence" value="ECO:0007669"/>
    <property type="project" value="UniProtKB-SubCell"/>
</dbReference>
<dbReference type="GO" id="GO:0004671">
    <property type="term" value="F:protein C-terminal S-isoprenylcysteine carboxyl O-methyltransferase activity"/>
    <property type="evidence" value="ECO:0007669"/>
    <property type="project" value="InterPro"/>
</dbReference>
<dbReference type="Gene3D" id="1.20.120.1630">
    <property type="match status" value="1"/>
</dbReference>
<dbReference type="InterPro" id="IPR007269">
    <property type="entry name" value="ICMT_MeTrfase"/>
</dbReference>
<dbReference type="InterPro" id="IPR052527">
    <property type="entry name" value="Metal_cation-efflux_comp"/>
</dbReference>
<dbReference type="PANTHER" id="PTHR43847">
    <property type="entry name" value="BLL3993 PROTEIN"/>
    <property type="match status" value="1"/>
</dbReference>
<dbReference type="PANTHER" id="PTHR43847:SF1">
    <property type="entry name" value="BLL3993 PROTEIN"/>
    <property type="match status" value="1"/>
</dbReference>
<dbReference type="Pfam" id="PF04140">
    <property type="entry name" value="ICMT"/>
    <property type="match status" value="1"/>
</dbReference>
<comment type="subcellular location">
    <subcellularLocation>
        <location evidence="2">Cell membrane</location>
        <topology evidence="2">Multi-pass membrane protein</topology>
    </subcellularLocation>
</comment>
<organism>
    <name type="scientific">Haemophilus influenzae (strain ATCC 51907 / DSM 11121 / KW20 / Rd)</name>
    <dbReference type="NCBI Taxonomy" id="71421"/>
    <lineage>
        <taxon>Bacteria</taxon>
        <taxon>Pseudomonadati</taxon>
        <taxon>Pseudomonadota</taxon>
        <taxon>Gammaproteobacteria</taxon>
        <taxon>Pasteurellales</taxon>
        <taxon>Pasteurellaceae</taxon>
        <taxon>Haemophilus</taxon>
    </lineage>
</organism>
<feature type="chain" id="PRO_0000077908" description="Uncharacterized protein HI_0318">
    <location>
        <begin position="1"/>
        <end position="172"/>
    </location>
</feature>
<feature type="transmembrane region" description="Helical" evidence="1">
    <location>
        <begin position="1"/>
        <end position="21"/>
    </location>
</feature>
<feature type="transmembrane region" description="Helical" evidence="1">
    <location>
        <begin position="41"/>
        <end position="61"/>
    </location>
</feature>
<feature type="transmembrane region" description="Helical" evidence="1">
    <location>
        <begin position="72"/>
        <end position="92"/>
    </location>
</feature>
<feature type="transmembrane region" description="Helical" evidence="1">
    <location>
        <begin position="136"/>
        <end position="156"/>
    </location>
</feature>
<name>Y318_HAEIN</name>
<keyword id="KW-1003">Cell membrane</keyword>
<keyword id="KW-0472">Membrane</keyword>
<keyword id="KW-1185">Reference proteome</keyword>
<keyword id="KW-0812">Transmembrane</keyword>
<keyword id="KW-1133">Transmembrane helix</keyword>
<gene>
    <name type="ordered locus">HI_0318</name>
</gene>
<reference key="1">
    <citation type="journal article" date="1995" name="Science">
        <title>Whole-genome random sequencing and assembly of Haemophilus influenzae Rd.</title>
        <authorList>
            <person name="Fleischmann R.D."/>
            <person name="Adams M.D."/>
            <person name="White O."/>
            <person name="Clayton R.A."/>
            <person name="Kirkness E.F."/>
            <person name="Kerlavage A.R."/>
            <person name="Bult C.J."/>
            <person name="Tomb J.-F."/>
            <person name="Dougherty B.A."/>
            <person name="Merrick J.M."/>
            <person name="McKenney K."/>
            <person name="Sutton G.G."/>
            <person name="FitzHugh W."/>
            <person name="Fields C.A."/>
            <person name="Gocayne J.D."/>
            <person name="Scott J.D."/>
            <person name="Shirley R."/>
            <person name="Liu L.-I."/>
            <person name="Glodek A."/>
            <person name="Kelley J.M."/>
            <person name="Weidman J.F."/>
            <person name="Phillips C.A."/>
            <person name="Spriggs T."/>
            <person name="Hedblom E."/>
            <person name="Cotton M.D."/>
            <person name="Utterback T.R."/>
            <person name="Hanna M.C."/>
            <person name="Nguyen D.T."/>
            <person name="Saudek D.M."/>
            <person name="Brandon R.C."/>
            <person name="Fine L.D."/>
            <person name="Fritchman J.L."/>
            <person name="Fuhrmann J.L."/>
            <person name="Geoghagen N.S.M."/>
            <person name="Gnehm C.L."/>
            <person name="McDonald L.A."/>
            <person name="Small K.V."/>
            <person name="Fraser C.M."/>
            <person name="Smith H.O."/>
            <person name="Venter J.C."/>
        </authorList>
    </citation>
    <scope>NUCLEOTIDE SEQUENCE [LARGE SCALE GENOMIC DNA]</scope>
    <source>
        <strain>ATCC 51907 / DSM 11121 / KW20 / Rd</strain>
    </source>
</reference>
<accession>P43984</accession>
<evidence type="ECO:0000255" key="1"/>
<evidence type="ECO:0000305" key="2"/>
<protein>
    <recommendedName>
        <fullName>Uncharacterized protein HI_0318</fullName>
    </recommendedName>
</protein>
<proteinExistence type="predicted"/>